<gene>
    <name evidence="1" type="primary">rsmA</name>
    <name evidence="1" type="synonym">ksgA</name>
    <name type="ordered locus">Nwi_1682</name>
</gene>
<dbReference type="EC" id="2.1.1.182" evidence="1"/>
<dbReference type="EMBL" id="CP000115">
    <property type="protein sequence ID" value="ABA04943.1"/>
    <property type="molecule type" value="Genomic_DNA"/>
</dbReference>
<dbReference type="RefSeq" id="WP_011314942.1">
    <property type="nucleotide sequence ID" value="NC_007406.1"/>
</dbReference>
<dbReference type="SMR" id="Q3SRZ8"/>
<dbReference type="STRING" id="323098.Nwi_1682"/>
<dbReference type="KEGG" id="nwi:Nwi_1682"/>
<dbReference type="eggNOG" id="COG0030">
    <property type="taxonomic scope" value="Bacteria"/>
</dbReference>
<dbReference type="HOGENOM" id="CLU_041220_0_1_5"/>
<dbReference type="OrthoDB" id="9814755at2"/>
<dbReference type="Proteomes" id="UP000002531">
    <property type="component" value="Chromosome"/>
</dbReference>
<dbReference type="GO" id="GO:0005829">
    <property type="term" value="C:cytosol"/>
    <property type="evidence" value="ECO:0007669"/>
    <property type="project" value="TreeGrafter"/>
</dbReference>
<dbReference type="GO" id="GO:0052908">
    <property type="term" value="F:16S rRNA (adenine(1518)-N(6)/adenine(1519)-N(6))-dimethyltransferase activity"/>
    <property type="evidence" value="ECO:0007669"/>
    <property type="project" value="UniProtKB-EC"/>
</dbReference>
<dbReference type="GO" id="GO:0003723">
    <property type="term" value="F:RNA binding"/>
    <property type="evidence" value="ECO:0007669"/>
    <property type="project" value="UniProtKB-KW"/>
</dbReference>
<dbReference type="CDD" id="cd02440">
    <property type="entry name" value="AdoMet_MTases"/>
    <property type="match status" value="1"/>
</dbReference>
<dbReference type="Gene3D" id="1.10.8.100">
    <property type="entry name" value="Ribosomal RNA adenine dimethylase-like, domain 2"/>
    <property type="match status" value="1"/>
</dbReference>
<dbReference type="Gene3D" id="3.40.50.150">
    <property type="entry name" value="Vaccinia Virus protein VP39"/>
    <property type="match status" value="1"/>
</dbReference>
<dbReference type="HAMAP" id="MF_00607">
    <property type="entry name" value="16SrRNA_methyltr_A"/>
    <property type="match status" value="1"/>
</dbReference>
<dbReference type="InterPro" id="IPR001737">
    <property type="entry name" value="KsgA/Erm"/>
</dbReference>
<dbReference type="InterPro" id="IPR023165">
    <property type="entry name" value="rRNA_Ade_diMease-like_C"/>
</dbReference>
<dbReference type="InterPro" id="IPR020596">
    <property type="entry name" value="rRNA_Ade_Mease_Trfase_CS"/>
</dbReference>
<dbReference type="InterPro" id="IPR020598">
    <property type="entry name" value="rRNA_Ade_methylase_Trfase_N"/>
</dbReference>
<dbReference type="InterPro" id="IPR011530">
    <property type="entry name" value="rRNA_adenine_dimethylase"/>
</dbReference>
<dbReference type="InterPro" id="IPR029063">
    <property type="entry name" value="SAM-dependent_MTases_sf"/>
</dbReference>
<dbReference type="NCBIfam" id="TIGR00755">
    <property type="entry name" value="ksgA"/>
    <property type="match status" value="1"/>
</dbReference>
<dbReference type="PANTHER" id="PTHR11727">
    <property type="entry name" value="DIMETHYLADENOSINE TRANSFERASE"/>
    <property type="match status" value="1"/>
</dbReference>
<dbReference type="PANTHER" id="PTHR11727:SF7">
    <property type="entry name" value="DIMETHYLADENOSINE TRANSFERASE-RELATED"/>
    <property type="match status" value="1"/>
</dbReference>
<dbReference type="Pfam" id="PF00398">
    <property type="entry name" value="RrnaAD"/>
    <property type="match status" value="1"/>
</dbReference>
<dbReference type="SMART" id="SM00650">
    <property type="entry name" value="rADc"/>
    <property type="match status" value="1"/>
</dbReference>
<dbReference type="SUPFAM" id="SSF53335">
    <property type="entry name" value="S-adenosyl-L-methionine-dependent methyltransferases"/>
    <property type="match status" value="1"/>
</dbReference>
<dbReference type="PROSITE" id="PS01131">
    <property type="entry name" value="RRNA_A_DIMETH"/>
    <property type="match status" value="1"/>
</dbReference>
<dbReference type="PROSITE" id="PS51689">
    <property type="entry name" value="SAM_RNA_A_N6_MT"/>
    <property type="match status" value="1"/>
</dbReference>
<evidence type="ECO:0000255" key="1">
    <source>
        <dbReference type="HAMAP-Rule" id="MF_00607"/>
    </source>
</evidence>
<sequence length="287" mass="31397">MSMIDDLPPLRDVIKRHALSARKSLGQNFLLDLNLTSRIARAAGPLQDATVVEIGPGPGGLTRALLAVGAKHVIAIERDERALGALEEISDRYPGRLTIINADATDFDPRPLLGTTRAKIVANLPYNIATALLIRWLSIEPWPPWYDVMVLMFQREVAERIVARENEDAYGRLGVLSNWRAETKILFDISPAAFVPQPQVTSSVVRLIPRYNPEPCDRRSLEQVAAAAFGHRRKMLRQSLKSLPADPASLAAAAGIDPTRRAETVSISGFAAMARELASIVGSGKRL</sequence>
<feature type="chain" id="PRO_0000257313" description="Ribosomal RNA small subunit methyltransferase A">
    <location>
        <begin position="1"/>
        <end position="287"/>
    </location>
</feature>
<feature type="binding site" evidence="1">
    <location>
        <position position="28"/>
    </location>
    <ligand>
        <name>S-adenosyl-L-methionine</name>
        <dbReference type="ChEBI" id="CHEBI:59789"/>
    </ligand>
</feature>
<feature type="binding site" evidence="1">
    <location>
        <position position="30"/>
    </location>
    <ligand>
        <name>S-adenosyl-L-methionine</name>
        <dbReference type="ChEBI" id="CHEBI:59789"/>
    </ligand>
</feature>
<feature type="binding site" evidence="1">
    <location>
        <position position="55"/>
    </location>
    <ligand>
        <name>S-adenosyl-L-methionine</name>
        <dbReference type="ChEBI" id="CHEBI:59789"/>
    </ligand>
</feature>
<feature type="binding site" evidence="1">
    <location>
        <position position="77"/>
    </location>
    <ligand>
        <name>S-adenosyl-L-methionine</name>
        <dbReference type="ChEBI" id="CHEBI:59789"/>
    </ligand>
</feature>
<feature type="binding site" evidence="1">
    <location>
        <position position="103"/>
    </location>
    <ligand>
        <name>S-adenosyl-L-methionine</name>
        <dbReference type="ChEBI" id="CHEBI:59789"/>
    </ligand>
</feature>
<feature type="binding site" evidence="1">
    <location>
        <position position="123"/>
    </location>
    <ligand>
        <name>S-adenosyl-L-methionine</name>
        <dbReference type="ChEBI" id="CHEBI:59789"/>
    </ligand>
</feature>
<accession>Q3SRZ8</accession>
<name>RSMA_NITWN</name>
<organism>
    <name type="scientific">Nitrobacter winogradskyi (strain ATCC 25391 / DSM 10237 / CIP 104748 / NCIMB 11846 / Nb-255)</name>
    <dbReference type="NCBI Taxonomy" id="323098"/>
    <lineage>
        <taxon>Bacteria</taxon>
        <taxon>Pseudomonadati</taxon>
        <taxon>Pseudomonadota</taxon>
        <taxon>Alphaproteobacteria</taxon>
        <taxon>Hyphomicrobiales</taxon>
        <taxon>Nitrobacteraceae</taxon>
        <taxon>Nitrobacter</taxon>
    </lineage>
</organism>
<reference key="1">
    <citation type="journal article" date="2006" name="Appl. Environ. Microbiol.">
        <title>Genome sequence of the chemolithoautotrophic nitrite-oxidizing bacterium Nitrobacter winogradskyi Nb-255.</title>
        <authorList>
            <person name="Starkenburg S.R."/>
            <person name="Chain P.S.G."/>
            <person name="Sayavedra-Soto L.A."/>
            <person name="Hauser L."/>
            <person name="Land M.L."/>
            <person name="Larimer F.W."/>
            <person name="Malfatti S.A."/>
            <person name="Klotz M.G."/>
            <person name="Bottomley P.J."/>
            <person name="Arp D.J."/>
            <person name="Hickey W.J."/>
        </authorList>
    </citation>
    <scope>NUCLEOTIDE SEQUENCE [LARGE SCALE GENOMIC DNA]</scope>
    <source>
        <strain>ATCC 25391 / DSM 10237 / CIP 104748 / NCIMB 11846 / Nb-255</strain>
    </source>
</reference>
<comment type="function">
    <text evidence="1">Specifically dimethylates two adjacent adenosines (A1518 and A1519) in the loop of a conserved hairpin near the 3'-end of 16S rRNA in the 30S particle. May play a critical role in biogenesis of 30S subunits.</text>
</comment>
<comment type="catalytic activity">
    <reaction evidence="1">
        <text>adenosine(1518)/adenosine(1519) in 16S rRNA + 4 S-adenosyl-L-methionine = N(6)-dimethyladenosine(1518)/N(6)-dimethyladenosine(1519) in 16S rRNA + 4 S-adenosyl-L-homocysteine + 4 H(+)</text>
        <dbReference type="Rhea" id="RHEA:19609"/>
        <dbReference type="Rhea" id="RHEA-COMP:10232"/>
        <dbReference type="Rhea" id="RHEA-COMP:10233"/>
        <dbReference type="ChEBI" id="CHEBI:15378"/>
        <dbReference type="ChEBI" id="CHEBI:57856"/>
        <dbReference type="ChEBI" id="CHEBI:59789"/>
        <dbReference type="ChEBI" id="CHEBI:74411"/>
        <dbReference type="ChEBI" id="CHEBI:74493"/>
        <dbReference type="EC" id="2.1.1.182"/>
    </reaction>
</comment>
<comment type="subcellular location">
    <subcellularLocation>
        <location evidence="1">Cytoplasm</location>
    </subcellularLocation>
</comment>
<comment type="similarity">
    <text evidence="1">Belongs to the class I-like SAM-binding methyltransferase superfamily. rRNA adenine N(6)-methyltransferase family. RsmA subfamily.</text>
</comment>
<keyword id="KW-0963">Cytoplasm</keyword>
<keyword id="KW-0489">Methyltransferase</keyword>
<keyword id="KW-1185">Reference proteome</keyword>
<keyword id="KW-0694">RNA-binding</keyword>
<keyword id="KW-0698">rRNA processing</keyword>
<keyword id="KW-0949">S-adenosyl-L-methionine</keyword>
<keyword id="KW-0808">Transferase</keyword>
<protein>
    <recommendedName>
        <fullName evidence="1">Ribosomal RNA small subunit methyltransferase A</fullName>
        <ecNumber evidence="1">2.1.1.182</ecNumber>
    </recommendedName>
    <alternativeName>
        <fullName evidence="1">16S rRNA (adenine(1518)-N(6)/adenine(1519)-N(6))-dimethyltransferase</fullName>
    </alternativeName>
    <alternativeName>
        <fullName evidence="1">16S rRNA dimethyladenosine transferase</fullName>
    </alternativeName>
    <alternativeName>
        <fullName evidence="1">16S rRNA dimethylase</fullName>
    </alternativeName>
    <alternativeName>
        <fullName evidence="1">S-adenosylmethionine-6-N', N'-adenosyl(rRNA) dimethyltransferase</fullName>
    </alternativeName>
</protein>
<proteinExistence type="inferred from homology"/>